<feature type="chain" id="PRO_0000293545" description="Transcription initiation factor TFIID subunit 7">
    <location>
        <begin position="1"/>
        <end position="349"/>
    </location>
</feature>
<feature type="region of interest" description="Disordered" evidence="4">
    <location>
        <begin position="105"/>
        <end position="126"/>
    </location>
</feature>
<feature type="region of interest" description="Disordered" evidence="4">
    <location>
        <begin position="186"/>
        <end position="212"/>
    </location>
</feature>
<feature type="region of interest" description="Disordered" evidence="4">
    <location>
        <begin position="227"/>
        <end position="247"/>
    </location>
</feature>
<feature type="region of interest" description="Disordered" evidence="4">
    <location>
        <begin position="328"/>
        <end position="349"/>
    </location>
</feature>
<feature type="coiled-coil region" evidence="3">
    <location>
        <begin position="236"/>
        <end position="341"/>
    </location>
</feature>
<feature type="compositionally biased region" description="Acidic residues" evidence="4">
    <location>
        <begin position="230"/>
        <end position="247"/>
    </location>
</feature>
<feature type="modified residue" description="Phosphoserine" evidence="1">
    <location>
        <position position="171"/>
    </location>
</feature>
<feature type="modified residue" description="Phosphoserine" evidence="1">
    <location>
        <position position="200"/>
    </location>
</feature>
<feature type="modified residue" description="Phosphoserine" evidence="1">
    <location>
        <position position="201"/>
    </location>
</feature>
<feature type="modified residue" description="Phosphoserine" evidence="1">
    <location>
        <position position="213"/>
    </location>
</feature>
<feature type="modified residue" description="Phosphoserine" evidence="1">
    <location>
        <position position="264"/>
    </location>
</feature>
<dbReference type="EMBL" id="AB169639">
    <property type="protein sequence ID" value="BAE01720.1"/>
    <property type="molecule type" value="mRNA"/>
</dbReference>
<dbReference type="RefSeq" id="NP_001272083.1">
    <property type="nucleotide sequence ID" value="NM_001285154.1"/>
</dbReference>
<dbReference type="RefSeq" id="XP_045250276.1">
    <property type="nucleotide sequence ID" value="XM_045394341.2"/>
</dbReference>
<dbReference type="SMR" id="Q4R5A5"/>
<dbReference type="Ensembl" id="ENSMFAT00000070556.2">
    <property type="protein sequence ID" value="ENSMFAP00000056970.1"/>
    <property type="gene ID" value="ENSMFAG00000032998.2"/>
</dbReference>
<dbReference type="GeneID" id="101864928"/>
<dbReference type="eggNOG" id="KOG4011">
    <property type="taxonomic scope" value="Eukaryota"/>
</dbReference>
<dbReference type="GeneTree" id="ENSGT00940000160861"/>
<dbReference type="Proteomes" id="UP000233100">
    <property type="component" value="Chromosome 6"/>
</dbReference>
<dbReference type="Bgee" id="ENSMFAG00000032998">
    <property type="expression patterns" value="Expressed in thymus and 13 other cell types or tissues"/>
</dbReference>
<dbReference type="GO" id="GO:0005737">
    <property type="term" value="C:cytoplasm"/>
    <property type="evidence" value="ECO:0007669"/>
    <property type="project" value="Ensembl"/>
</dbReference>
<dbReference type="GO" id="GO:0001673">
    <property type="term" value="C:male germ cell nucleus"/>
    <property type="evidence" value="ECO:0007669"/>
    <property type="project" value="Ensembl"/>
</dbReference>
<dbReference type="GO" id="GO:0071339">
    <property type="term" value="C:MLL1 complex"/>
    <property type="evidence" value="ECO:0000250"/>
    <property type="project" value="UniProtKB"/>
</dbReference>
<dbReference type="GO" id="GO:0005669">
    <property type="term" value="C:transcription factor TFIID complex"/>
    <property type="evidence" value="ECO:0000250"/>
    <property type="project" value="UniProtKB"/>
</dbReference>
<dbReference type="GO" id="GO:0033276">
    <property type="term" value="C:transcription factor TFTC complex"/>
    <property type="evidence" value="ECO:0007669"/>
    <property type="project" value="Ensembl"/>
</dbReference>
<dbReference type="GO" id="GO:0035035">
    <property type="term" value="F:histone acetyltransferase binding"/>
    <property type="evidence" value="ECO:0007669"/>
    <property type="project" value="Ensembl"/>
</dbReference>
<dbReference type="GO" id="GO:0061628">
    <property type="term" value="F:histone H3K27me3 reader activity"/>
    <property type="evidence" value="ECO:0007669"/>
    <property type="project" value="Ensembl"/>
</dbReference>
<dbReference type="GO" id="GO:0046966">
    <property type="term" value="F:nuclear thyroid hormone receptor binding"/>
    <property type="evidence" value="ECO:0007669"/>
    <property type="project" value="Ensembl"/>
</dbReference>
<dbReference type="GO" id="GO:0042809">
    <property type="term" value="F:nuclear vitamin D receptor binding"/>
    <property type="evidence" value="ECO:0007669"/>
    <property type="project" value="Ensembl"/>
</dbReference>
<dbReference type="GO" id="GO:0106140">
    <property type="term" value="F:P-TEFb complex binding"/>
    <property type="evidence" value="ECO:0007669"/>
    <property type="project" value="Ensembl"/>
</dbReference>
<dbReference type="GO" id="GO:0046982">
    <property type="term" value="F:protein heterodimerization activity"/>
    <property type="evidence" value="ECO:0007669"/>
    <property type="project" value="Ensembl"/>
</dbReference>
<dbReference type="GO" id="GO:0016251">
    <property type="term" value="F:RNA polymerase II general transcription initiation factor activity"/>
    <property type="evidence" value="ECO:0007669"/>
    <property type="project" value="Ensembl"/>
</dbReference>
<dbReference type="GO" id="GO:0001097">
    <property type="term" value="F:TFIIH-class transcription factor complex binding"/>
    <property type="evidence" value="ECO:0007669"/>
    <property type="project" value="Ensembl"/>
</dbReference>
<dbReference type="GO" id="GO:0000976">
    <property type="term" value="F:transcription cis-regulatory region binding"/>
    <property type="evidence" value="ECO:0007669"/>
    <property type="project" value="Ensembl"/>
</dbReference>
<dbReference type="GO" id="GO:0030520">
    <property type="term" value="P:estrogen receptor signaling pathway"/>
    <property type="evidence" value="ECO:0007669"/>
    <property type="project" value="Ensembl"/>
</dbReference>
<dbReference type="GO" id="GO:0042789">
    <property type="term" value="P:mRNA transcription by RNA polymerase II"/>
    <property type="evidence" value="ECO:0007669"/>
    <property type="project" value="Ensembl"/>
</dbReference>
<dbReference type="GO" id="GO:0045344">
    <property type="term" value="P:negative regulation of MHC class I biosynthetic process"/>
    <property type="evidence" value="ECO:0007669"/>
    <property type="project" value="Ensembl"/>
</dbReference>
<dbReference type="GO" id="GO:0045347">
    <property type="term" value="P:negative regulation of MHC class II biosynthetic process"/>
    <property type="evidence" value="ECO:0007669"/>
    <property type="project" value="Ensembl"/>
</dbReference>
<dbReference type="GO" id="GO:0000122">
    <property type="term" value="P:negative regulation of transcription by RNA polymerase II"/>
    <property type="evidence" value="ECO:0007669"/>
    <property type="project" value="Ensembl"/>
</dbReference>
<dbReference type="GO" id="GO:0060261">
    <property type="term" value="P:positive regulation of transcription initiation by RNA polymerase II"/>
    <property type="evidence" value="ECO:0007669"/>
    <property type="project" value="Ensembl"/>
</dbReference>
<dbReference type="GO" id="GO:0051123">
    <property type="term" value="P:RNA polymerase II preinitiation complex assembly"/>
    <property type="evidence" value="ECO:0007669"/>
    <property type="project" value="Ensembl"/>
</dbReference>
<dbReference type="CDD" id="cd08047">
    <property type="entry name" value="TAF7"/>
    <property type="match status" value="1"/>
</dbReference>
<dbReference type="InterPro" id="IPR037817">
    <property type="entry name" value="TAF7"/>
</dbReference>
<dbReference type="InterPro" id="IPR006751">
    <property type="entry name" value="TAFII55_prot_cons_reg"/>
</dbReference>
<dbReference type="PANTHER" id="PTHR12228">
    <property type="entry name" value="TRANSCRIPTION INITIATION FACTOR TFIID 55 KD SUBUNIT-RELATED"/>
    <property type="match status" value="1"/>
</dbReference>
<dbReference type="PANTHER" id="PTHR12228:SF6">
    <property type="entry name" value="TRANSCRIPTION INITIATION FACTOR TFIID SUBUNIT 7"/>
    <property type="match status" value="1"/>
</dbReference>
<dbReference type="Pfam" id="PF04658">
    <property type="entry name" value="TAFII55_N"/>
    <property type="match status" value="1"/>
</dbReference>
<dbReference type="SMART" id="SM01370">
    <property type="entry name" value="TAFII55_N"/>
    <property type="match status" value="1"/>
</dbReference>
<evidence type="ECO:0000250" key="1">
    <source>
        <dbReference type="UniProtKB" id="Q15545"/>
    </source>
</evidence>
<evidence type="ECO:0000250" key="2">
    <source>
        <dbReference type="UniProtKB" id="Q9R1C0"/>
    </source>
</evidence>
<evidence type="ECO:0000255" key="3"/>
<evidence type="ECO:0000256" key="4">
    <source>
        <dbReference type="SAM" id="MobiDB-lite"/>
    </source>
</evidence>
<evidence type="ECO:0000305" key="5"/>
<gene>
    <name type="primary">TAF7</name>
    <name type="ORF">QccE-10107</name>
</gene>
<keyword id="KW-0175">Coiled coil</keyword>
<keyword id="KW-0539">Nucleus</keyword>
<keyword id="KW-0597">Phosphoprotein</keyword>
<keyword id="KW-1185">Reference proteome</keyword>
<keyword id="KW-0804">Transcription</keyword>
<keyword id="KW-0805">Transcription regulation</keyword>
<keyword id="KW-0832">Ubl conjugation</keyword>
<accession>Q4R5A5</accession>
<organism>
    <name type="scientific">Macaca fascicularis</name>
    <name type="common">Crab-eating macaque</name>
    <name type="synonym">Cynomolgus monkey</name>
    <dbReference type="NCBI Taxonomy" id="9541"/>
    <lineage>
        <taxon>Eukaryota</taxon>
        <taxon>Metazoa</taxon>
        <taxon>Chordata</taxon>
        <taxon>Craniata</taxon>
        <taxon>Vertebrata</taxon>
        <taxon>Euteleostomi</taxon>
        <taxon>Mammalia</taxon>
        <taxon>Eutheria</taxon>
        <taxon>Euarchontoglires</taxon>
        <taxon>Primates</taxon>
        <taxon>Haplorrhini</taxon>
        <taxon>Catarrhini</taxon>
        <taxon>Cercopithecidae</taxon>
        <taxon>Cercopithecinae</taxon>
        <taxon>Macaca</taxon>
    </lineage>
</organism>
<reference key="1">
    <citation type="submission" date="2005-06" db="EMBL/GenBank/DDBJ databases">
        <title>DNA sequences of macaque genes expressed in brain or testis and its evolutionary implications.</title>
        <authorList>
            <consortium name="International consortium for macaque cDNA sequencing and analysis"/>
        </authorList>
    </citation>
    <scope>NUCLEOTIDE SEQUENCE [LARGE SCALE MRNA]</scope>
    <source>
        <tissue>Brain cortex</tissue>
    </source>
</reference>
<comment type="function">
    <text evidence="1">The TFIID basal transcription factor complex plays a major role in the initiation of RNA polymerase II (Pol II)-dependent transcription. TFIID recognizes and binds promoters with or without a TATA box via its subunit TBP, a TATA-box-binding protein, and promotes assembly of the pre-initiation complex (PIC). The TFIID complex consists of TBP and TBP-associated factors (TAFs), including TAF1, TAF2, TAF3, TAF4, TAF5, TAF6, TAF7, TAF8, TAF9, TAF10, TAF11, TAF12 and TAF13. TAF7 forms a promoter DNA binding subcomplex of TFIID, together with TAF1 and TAF2. Part of a TFIID complex containing TAF10 (TFIID alpha) and a TFIID complex lacking TAF10 (TFIID beta).</text>
</comment>
<comment type="subunit">
    <text evidence="1">Component of the TFIID basal transcription factor complex, composed of TATA-box-binding protein TBP, and a number of TBP-associated factors (TAFs), including TAF1, TAF2, TAF3, TAF4, TAF5, TAF6, TAF7, TAF8, TAF9, TAF10, TAF11, TAF12 and TAF13. Part of a TFIID-containing RNA polymerase II pre-initiation complex that is composed of TBP and at least GTF2A1, GTF2A2, GTF2E1, GTF2E2, GTF2F1, GTF2H2, GTF2H3, GTF2H4, GTF2H5, GTF2B, TCEA1, ERCC2, ERCC3, TAF1, TAF2, TAF3, TAF4, TAF5, TAF6, TAF7, TAF8, TAF9, TAF10, TAF11, TAF12 and TAF13. Interacts with TAF1; the interaction is direct. Interacts with TAF1, TAF5, TAF11, TAF12, and TAF13, but not with TAF10 or TBP. Component of some MLL1/MLL complex, at least composed of the core components KMT2A/MLL1, ASH2L, HCFC1/HCF1, WDR5 and RBBP5, as well as the facultative components BACC1, CHD8, E2F6, HSP70, INO80C, KANSL1, LAS1L, MAX, MCRS1, MGA, MYST1/MOF, PELP1, PHF20, PRP31, RING2, RUVB1/TIP49A, RUVB2/TIP49B, SENP3, TAF1, TAF4, TAF6, TAF7, TAF9 and TEX10. Interacts with CIITA and TAF1 and inhibits their acetyltransferase activity, and behaving as a repressor of CIITA- and TAF1-regulated promoters.</text>
</comment>
<comment type="subcellular location">
    <subcellularLocation>
        <location evidence="2">Nucleus</location>
    </subcellularLocation>
</comment>
<comment type="PTM">
    <text evidence="1">Phosphorylated by CIITA. Phosphorylation at Ser-264 by TAF1 in early G1 phase disrupts binding to TAF1.</text>
</comment>
<comment type="PTM">
    <text evidence="1">Ubiquitinated by TRIM26; leading to proteasomal degradation.</text>
</comment>
<comment type="similarity">
    <text evidence="5">Belongs to the TAF7 family.</text>
</comment>
<proteinExistence type="evidence at transcript level"/>
<protein>
    <recommendedName>
        <fullName>Transcription initiation factor TFIID subunit 7</fullName>
    </recommendedName>
</protein>
<sequence>MSKSKDDAPHELESQFILRLPPEYASTVRRAVQSGHVNLKDRLTIELHPDGRHGIVRVDRVPLASKLVDLPCVMESLKTIDKKTFYKTADICQMLVSTVDGDLYPPVEEPVASTDPKASKKKDKDKEKKFIWNHGITLPLKNVRKRRFRKTAKKKYIESPDVEKEVKRLLSTDAEAVSTRWEIIAEDETKEAENQGLDISSPGMSGHRQGHDSLEHDELREIFNDLSSSSEDEDETQHQDEEDINIIDTEEDLERQLQDKLNESDEQHQENEGTNQLVMGIQKQIDNMKGKLQETQDRAKRQEDLIMKVENLALKNRFQAVLDELKQKEDREKEQLSSLQEELESLLEK</sequence>
<name>TAF7_MACFA</name>